<keyword id="KW-0028">Amino-acid biosynthesis</keyword>
<keyword id="KW-0368">Histidine biosynthesis</keyword>
<keyword id="KW-0378">Hydrolase</keyword>
<keyword id="KW-0486">Methionine biosynthesis</keyword>
<keyword id="KW-0511">Multifunctional enzyme</keyword>
<keyword id="KW-0521">NADP</keyword>
<keyword id="KW-0554">One-carbon metabolism</keyword>
<keyword id="KW-0560">Oxidoreductase</keyword>
<keyword id="KW-0658">Purine biosynthesis</keyword>
<keyword id="KW-1185">Reference proteome</keyword>
<protein>
    <recommendedName>
        <fullName evidence="1">Bifunctional protein FolD</fullName>
    </recommendedName>
    <domain>
        <recommendedName>
            <fullName evidence="1">Methylenetetrahydrofolate dehydrogenase</fullName>
            <ecNumber evidence="1">1.5.1.5</ecNumber>
        </recommendedName>
    </domain>
    <domain>
        <recommendedName>
            <fullName evidence="1">Methenyltetrahydrofolate cyclohydrolase</fullName>
            <ecNumber evidence="1">3.5.4.9</ecNumber>
        </recommendedName>
    </domain>
</protein>
<comment type="function">
    <text evidence="1">Catalyzes the oxidation of 5,10-methylenetetrahydrofolate to 5,10-methenyltetrahydrofolate and then the hydrolysis of 5,10-methenyltetrahydrofolate to 10-formyltetrahydrofolate.</text>
</comment>
<comment type="catalytic activity">
    <reaction evidence="1">
        <text>(6R)-5,10-methylene-5,6,7,8-tetrahydrofolate + NADP(+) = (6R)-5,10-methenyltetrahydrofolate + NADPH</text>
        <dbReference type="Rhea" id="RHEA:22812"/>
        <dbReference type="ChEBI" id="CHEBI:15636"/>
        <dbReference type="ChEBI" id="CHEBI:57455"/>
        <dbReference type="ChEBI" id="CHEBI:57783"/>
        <dbReference type="ChEBI" id="CHEBI:58349"/>
        <dbReference type="EC" id="1.5.1.5"/>
    </reaction>
</comment>
<comment type="catalytic activity">
    <reaction evidence="1">
        <text>(6R)-5,10-methenyltetrahydrofolate + H2O = (6R)-10-formyltetrahydrofolate + H(+)</text>
        <dbReference type="Rhea" id="RHEA:23700"/>
        <dbReference type="ChEBI" id="CHEBI:15377"/>
        <dbReference type="ChEBI" id="CHEBI:15378"/>
        <dbReference type="ChEBI" id="CHEBI:57455"/>
        <dbReference type="ChEBI" id="CHEBI:195366"/>
        <dbReference type="EC" id="3.5.4.9"/>
    </reaction>
</comment>
<comment type="pathway">
    <text evidence="1">One-carbon metabolism; tetrahydrofolate interconversion.</text>
</comment>
<comment type="subunit">
    <text evidence="1">Homodimer.</text>
</comment>
<comment type="similarity">
    <text evidence="1">Belongs to the tetrahydrofolate dehydrogenase/cyclohydrolase family.</text>
</comment>
<organism>
    <name type="scientific">Shewanella denitrificans (strain OS217 / ATCC BAA-1090 / DSM 15013)</name>
    <dbReference type="NCBI Taxonomy" id="318161"/>
    <lineage>
        <taxon>Bacteria</taxon>
        <taxon>Pseudomonadati</taxon>
        <taxon>Pseudomonadota</taxon>
        <taxon>Gammaproteobacteria</taxon>
        <taxon>Alteromonadales</taxon>
        <taxon>Shewanellaceae</taxon>
        <taxon>Shewanella</taxon>
    </lineage>
</organism>
<proteinExistence type="inferred from homology"/>
<reference key="1">
    <citation type="submission" date="2006-03" db="EMBL/GenBank/DDBJ databases">
        <title>Complete sequence of Shewanella denitrificans OS217.</title>
        <authorList>
            <consortium name="US DOE Joint Genome Institute"/>
            <person name="Copeland A."/>
            <person name="Lucas S."/>
            <person name="Lapidus A."/>
            <person name="Barry K."/>
            <person name="Detter J.C."/>
            <person name="Glavina del Rio T."/>
            <person name="Hammon N."/>
            <person name="Israni S."/>
            <person name="Dalin E."/>
            <person name="Tice H."/>
            <person name="Pitluck S."/>
            <person name="Brettin T."/>
            <person name="Bruce D."/>
            <person name="Han C."/>
            <person name="Tapia R."/>
            <person name="Gilna P."/>
            <person name="Kiss H."/>
            <person name="Schmutz J."/>
            <person name="Larimer F."/>
            <person name="Land M."/>
            <person name="Hauser L."/>
            <person name="Kyrpides N."/>
            <person name="Lykidis A."/>
            <person name="Richardson P."/>
        </authorList>
    </citation>
    <scope>NUCLEOTIDE SEQUENCE [LARGE SCALE GENOMIC DNA]</scope>
    <source>
        <strain>OS217 / ATCC BAA-1090 / DSM 15013</strain>
    </source>
</reference>
<evidence type="ECO:0000255" key="1">
    <source>
        <dbReference type="HAMAP-Rule" id="MF_01576"/>
    </source>
</evidence>
<sequence length="286" mass="30663">MTAQLIDGKAIAQTIRSTLKQKVAARIEAGKRAPGLAVILVGLDAASKIYVGSKRRACEEVGFESRSFDLDINTSEADLLALIDKCNQDPSIDGILVQLPLPEHIDDSKVIERIRPDKDVDGFHPYNVGRLAQRIPVLRPCTPLGIMTLIKSTGVDTYGLDATIVGASNIVGRPMTLELLLAGCTTTTCHRFTKNLEQKVRQADLLVVAVGKPGFILGEWIKPGAIVIDVGINRLENGSLVGDVEFDAASQHAGFITPVPGGVGPMTIACLLENTLYAAETYHDVN</sequence>
<feature type="chain" id="PRO_0000268492" description="Bifunctional protein FolD">
    <location>
        <begin position="1"/>
        <end position="286"/>
    </location>
</feature>
<feature type="binding site" evidence="1">
    <location>
        <begin position="166"/>
        <end position="168"/>
    </location>
    <ligand>
        <name>NADP(+)</name>
        <dbReference type="ChEBI" id="CHEBI:58349"/>
    </ligand>
</feature>
<feature type="binding site" evidence="1">
    <location>
        <position position="232"/>
    </location>
    <ligand>
        <name>NADP(+)</name>
        <dbReference type="ChEBI" id="CHEBI:58349"/>
    </ligand>
</feature>
<dbReference type="EC" id="1.5.1.5" evidence="1"/>
<dbReference type="EC" id="3.5.4.9" evidence="1"/>
<dbReference type="EMBL" id="CP000302">
    <property type="protein sequence ID" value="ABE55777.1"/>
    <property type="molecule type" value="Genomic_DNA"/>
</dbReference>
<dbReference type="RefSeq" id="WP_011496928.1">
    <property type="nucleotide sequence ID" value="NC_007954.1"/>
</dbReference>
<dbReference type="SMR" id="Q12L99"/>
<dbReference type="STRING" id="318161.Sden_2497"/>
<dbReference type="KEGG" id="sdn:Sden_2497"/>
<dbReference type="eggNOG" id="COG0190">
    <property type="taxonomic scope" value="Bacteria"/>
</dbReference>
<dbReference type="HOGENOM" id="CLU_034045_2_1_6"/>
<dbReference type="OrthoDB" id="9803580at2"/>
<dbReference type="UniPathway" id="UPA00193"/>
<dbReference type="Proteomes" id="UP000001982">
    <property type="component" value="Chromosome"/>
</dbReference>
<dbReference type="GO" id="GO:0005829">
    <property type="term" value="C:cytosol"/>
    <property type="evidence" value="ECO:0007669"/>
    <property type="project" value="TreeGrafter"/>
</dbReference>
<dbReference type="GO" id="GO:0004477">
    <property type="term" value="F:methenyltetrahydrofolate cyclohydrolase activity"/>
    <property type="evidence" value="ECO:0007669"/>
    <property type="project" value="UniProtKB-UniRule"/>
</dbReference>
<dbReference type="GO" id="GO:0004488">
    <property type="term" value="F:methylenetetrahydrofolate dehydrogenase (NADP+) activity"/>
    <property type="evidence" value="ECO:0007669"/>
    <property type="project" value="UniProtKB-UniRule"/>
</dbReference>
<dbReference type="GO" id="GO:0000105">
    <property type="term" value="P:L-histidine biosynthetic process"/>
    <property type="evidence" value="ECO:0007669"/>
    <property type="project" value="UniProtKB-KW"/>
</dbReference>
<dbReference type="GO" id="GO:0009086">
    <property type="term" value="P:methionine biosynthetic process"/>
    <property type="evidence" value="ECO:0007669"/>
    <property type="project" value="UniProtKB-KW"/>
</dbReference>
<dbReference type="GO" id="GO:0006164">
    <property type="term" value="P:purine nucleotide biosynthetic process"/>
    <property type="evidence" value="ECO:0007669"/>
    <property type="project" value="UniProtKB-KW"/>
</dbReference>
<dbReference type="GO" id="GO:0035999">
    <property type="term" value="P:tetrahydrofolate interconversion"/>
    <property type="evidence" value="ECO:0007669"/>
    <property type="project" value="UniProtKB-UniRule"/>
</dbReference>
<dbReference type="CDD" id="cd01080">
    <property type="entry name" value="NAD_bind_m-THF_DH_Cyclohyd"/>
    <property type="match status" value="1"/>
</dbReference>
<dbReference type="FunFam" id="3.40.50.10860:FF:000001">
    <property type="entry name" value="Bifunctional protein FolD"/>
    <property type="match status" value="1"/>
</dbReference>
<dbReference type="FunFam" id="3.40.50.720:FF:000006">
    <property type="entry name" value="Bifunctional protein FolD"/>
    <property type="match status" value="1"/>
</dbReference>
<dbReference type="Gene3D" id="3.40.50.10860">
    <property type="entry name" value="Leucine Dehydrogenase, chain A, domain 1"/>
    <property type="match status" value="1"/>
</dbReference>
<dbReference type="Gene3D" id="3.40.50.720">
    <property type="entry name" value="NAD(P)-binding Rossmann-like Domain"/>
    <property type="match status" value="1"/>
</dbReference>
<dbReference type="HAMAP" id="MF_01576">
    <property type="entry name" value="THF_DHG_CYH"/>
    <property type="match status" value="1"/>
</dbReference>
<dbReference type="InterPro" id="IPR046346">
    <property type="entry name" value="Aminoacid_DH-like_N_sf"/>
</dbReference>
<dbReference type="InterPro" id="IPR036291">
    <property type="entry name" value="NAD(P)-bd_dom_sf"/>
</dbReference>
<dbReference type="InterPro" id="IPR000672">
    <property type="entry name" value="THF_DH/CycHdrlase"/>
</dbReference>
<dbReference type="InterPro" id="IPR020630">
    <property type="entry name" value="THF_DH/CycHdrlase_cat_dom"/>
</dbReference>
<dbReference type="InterPro" id="IPR020867">
    <property type="entry name" value="THF_DH/CycHdrlase_CS"/>
</dbReference>
<dbReference type="InterPro" id="IPR020631">
    <property type="entry name" value="THF_DH/CycHdrlase_NAD-bd_dom"/>
</dbReference>
<dbReference type="NCBIfam" id="NF008058">
    <property type="entry name" value="PRK10792.1"/>
    <property type="match status" value="1"/>
</dbReference>
<dbReference type="PANTHER" id="PTHR48099:SF5">
    <property type="entry name" value="C-1-TETRAHYDROFOLATE SYNTHASE, CYTOPLASMIC"/>
    <property type="match status" value="1"/>
</dbReference>
<dbReference type="PANTHER" id="PTHR48099">
    <property type="entry name" value="C-1-TETRAHYDROFOLATE SYNTHASE, CYTOPLASMIC-RELATED"/>
    <property type="match status" value="1"/>
</dbReference>
<dbReference type="Pfam" id="PF00763">
    <property type="entry name" value="THF_DHG_CYH"/>
    <property type="match status" value="1"/>
</dbReference>
<dbReference type="Pfam" id="PF02882">
    <property type="entry name" value="THF_DHG_CYH_C"/>
    <property type="match status" value="1"/>
</dbReference>
<dbReference type="PRINTS" id="PR00085">
    <property type="entry name" value="THFDHDRGNASE"/>
</dbReference>
<dbReference type="SUPFAM" id="SSF53223">
    <property type="entry name" value="Aminoacid dehydrogenase-like, N-terminal domain"/>
    <property type="match status" value="1"/>
</dbReference>
<dbReference type="SUPFAM" id="SSF51735">
    <property type="entry name" value="NAD(P)-binding Rossmann-fold domains"/>
    <property type="match status" value="1"/>
</dbReference>
<dbReference type="PROSITE" id="PS00767">
    <property type="entry name" value="THF_DHG_CYH_2"/>
    <property type="match status" value="1"/>
</dbReference>
<accession>Q12L99</accession>
<gene>
    <name evidence="1" type="primary">folD</name>
    <name type="ordered locus">Sden_2497</name>
</gene>
<name>FOLD_SHEDO</name>